<dbReference type="EC" id="5.4.3.8" evidence="1"/>
<dbReference type="EMBL" id="CP000504">
    <property type="protein sequence ID" value="ABL87297.1"/>
    <property type="molecule type" value="Genomic_DNA"/>
</dbReference>
<dbReference type="RefSeq" id="WP_011761874.1">
    <property type="nucleotide sequence ID" value="NC_008701.1"/>
</dbReference>
<dbReference type="SMR" id="A1RQR5"/>
<dbReference type="STRING" id="384616.Pisl_0114"/>
<dbReference type="GeneID" id="4617546"/>
<dbReference type="KEGG" id="pis:Pisl_0114"/>
<dbReference type="eggNOG" id="arCOG00918">
    <property type="taxonomic scope" value="Archaea"/>
</dbReference>
<dbReference type="HOGENOM" id="CLU_016922_1_5_2"/>
<dbReference type="OrthoDB" id="6524at2157"/>
<dbReference type="UniPathway" id="UPA00251">
    <property type="reaction ID" value="UER00317"/>
</dbReference>
<dbReference type="Proteomes" id="UP000002595">
    <property type="component" value="Chromosome"/>
</dbReference>
<dbReference type="GO" id="GO:0005737">
    <property type="term" value="C:cytoplasm"/>
    <property type="evidence" value="ECO:0007669"/>
    <property type="project" value="UniProtKB-SubCell"/>
</dbReference>
<dbReference type="GO" id="GO:0042286">
    <property type="term" value="F:glutamate-1-semialdehyde 2,1-aminomutase activity"/>
    <property type="evidence" value="ECO:0007669"/>
    <property type="project" value="UniProtKB-UniRule"/>
</dbReference>
<dbReference type="GO" id="GO:0030170">
    <property type="term" value="F:pyridoxal phosphate binding"/>
    <property type="evidence" value="ECO:0007669"/>
    <property type="project" value="InterPro"/>
</dbReference>
<dbReference type="GO" id="GO:0008483">
    <property type="term" value="F:transaminase activity"/>
    <property type="evidence" value="ECO:0007669"/>
    <property type="project" value="InterPro"/>
</dbReference>
<dbReference type="GO" id="GO:0006782">
    <property type="term" value="P:protoporphyrinogen IX biosynthetic process"/>
    <property type="evidence" value="ECO:0007669"/>
    <property type="project" value="UniProtKB-UniRule"/>
</dbReference>
<dbReference type="CDD" id="cd00610">
    <property type="entry name" value="OAT_like"/>
    <property type="match status" value="1"/>
</dbReference>
<dbReference type="FunFam" id="3.40.640.10:FF:000021">
    <property type="entry name" value="Glutamate-1-semialdehyde 2,1-aminomutase"/>
    <property type="match status" value="1"/>
</dbReference>
<dbReference type="Gene3D" id="3.90.1150.10">
    <property type="entry name" value="Aspartate Aminotransferase, domain 1"/>
    <property type="match status" value="1"/>
</dbReference>
<dbReference type="Gene3D" id="3.40.640.10">
    <property type="entry name" value="Type I PLP-dependent aspartate aminotransferase-like (Major domain)"/>
    <property type="match status" value="1"/>
</dbReference>
<dbReference type="HAMAP" id="MF_00375">
    <property type="entry name" value="HemL_aminotrans_3"/>
    <property type="match status" value="1"/>
</dbReference>
<dbReference type="InterPro" id="IPR004639">
    <property type="entry name" value="4pyrrol_synth_GluAld_NH2Trfase"/>
</dbReference>
<dbReference type="InterPro" id="IPR005814">
    <property type="entry name" value="Aminotrans_3"/>
</dbReference>
<dbReference type="InterPro" id="IPR049704">
    <property type="entry name" value="Aminotrans_3_PPA_site"/>
</dbReference>
<dbReference type="InterPro" id="IPR015424">
    <property type="entry name" value="PyrdxlP-dep_Trfase"/>
</dbReference>
<dbReference type="InterPro" id="IPR015421">
    <property type="entry name" value="PyrdxlP-dep_Trfase_major"/>
</dbReference>
<dbReference type="InterPro" id="IPR015422">
    <property type="entry name" value="PyrdxlP-dep_Trfase_small"/>
</dbReference>
<dbReference type="NCBIfam" id="TIGR00713">
    <property type="entry name" value="hemL"/>
    <property type="match status" value="1"/>
</dbReference>
<dbReference type="NCBIfam" id="NF000818">
    <property type="entry name" value="PRK00062.1"/>
    <property type="match status" value="1"/>
</dbReference>
<dbReference type="PANTHER" id="PTHR43713">
    <property type="entry name" value="GLUTAMATE-1-SEMIALDEHYDE 2,1-AMINOMUTASE"/>
    <property type="match status" value="1"/>
</dbReference>
<dbReference type="PANTHER" id="PTHR43713:SF3">
    <property type="entry name" value="GLUTAMATE-1-SEMIALDEHYDE 2,1-AMINOMUTASE 1, CHLOROPLASTIC-RELATED"/>
    <property type="match status" value="1"/>
</dbReference>
<dbReference type="Pfam" id="PF00202">
    <property type="entry name" value="Aminotran_3"/>
    <property type="match status" value="1"/>
</dbReference>
<dbReference type="SUPFAM" id="SSF53383">
    <property type="entry name" value="PLP-dependent transferases"/>
    <property type="match status" value="1"/>
</dbReference>
<dbReference type="PROSITE" id="PS00600">
    <property type="entry name" value="AA_TRANSFER_CLASS_3"/>
    <property type="match status" value="1"/>
</dbReference>
<sequence length="424" mass="45776">MLFERARGVFPGGVNSPARALKHLAAPLVAKGASGPYLYTDRGRLVDYCMAFGAIILGHAHPRVKNAVTQQLERGWIYALLTEEEVAYAERIKAHVPSIEKMRIVNSGTEATMNAVRLARGYTRRDVIIKFDGNFHGSHDYVLVKAGSGAATWGIPTSAGVPQDVIKLTAVVPYNDVDAFVKTVREIGGRLAAVIVEPIAANYGLIIPDREFIKALKEETERVGALLIFDEVVTGFRVGLSGAQGHFGVRPDLTTLGKVVGGGFPIGIFGGRADVMDMVAPSGPVYNAGTYNAHPVSVAAGLAVIEELEKGEPYKIANEAAERLAKGIEDIAGRAGFDVVVKQIASMFQLYFKRGDVKTPQDVRESDEKLYLKLHELAIKHGVYLAPSQYETNFTSAAHTQDVVETTLAALEKAFTELKSQVGK</sequence>
<accession>A1RQR5</accession>
<feature type="chain" id="PRO_0000382412" description="Glutamate-1-semialdehyde 2,1-aminomutase">
    <location>
        <begin position="1"/>
        <end position="424"/>
    </location>
</feature>
<feature type="modified residue" description="N6-(pyridoxal phosphate)lysine" evidence="1">
    <location>
        <position position="258"/>
    </location>
</feature>
<evidence type="ECO:0000255" key="1">
    <source>
        <dbReference type="HAMAP-Rule" id="MF_00375"/>
    </source>
</evidence>
<reference key="1">
    <citation type="submission" date="2006-12" db="EMBL/GenBank/DDBJ databases">
        <title>Complete sequence of Pyrobaculum islandicum DSM 4184.</title>
        <authorList>
            <person name="Copeland A."/>
            <person name="Lucas S."/>
            <person name="Lapidus A."/>
            <person name="Barry K."/>
            <person name="Detter J.C."/>
            <person name="Glavina del Rio T."/>
            <person name="Dalin E."/>
            <person name="Tice H."/>
            <person name="Pitluck S."/>
            <person name="Meincke L."/>
            <person name="Brettin T."/>
            <person name="Bruce D."/>
            <person name="Han C."/>
            <person name="Tapia R."/>
            <person name="Gilna P."/>
            <person name="Schmutz J."/>
            <person name="Larimer F."/>
            <person name="Land M."/>
            <person name="Hauser L."/>
            <person name="Kyrpides N."/>
            <person name="Mikhailova N."/>
            <person name="Cozen A.E."/>
            <person name="Fitz-Gibbon S.T."/>
            <person name="House C.H."/>
            <person name="Saltikov C."/>
            <person name="Lowe T."/>
            <person name="Richardson P."/>
        </authorList>
    </citation>
    <scope>NUCLEOTIDE SEQUENCE [LARGE SCALE GENOMIC DNA]</scope>
    <source>
        <strain>DSM 4184 / JCM 9189 / GEO3</strain>
    </source>
</reference>
<gene>
    <name evidence="1" type="primary">hemL</name>
    <name type="ordered locus">Pisl_0114</name>
</gene>
<organism>
    <name type="scientific">Pyrobaculum islandicum (strain DSM 4184 / JCM 9189 / GEO3)</name>
    <dbReference type="NCBI Taxonomy" id="384616"/>
    <lineage>
        <taxon>Archaea</taxon>
        <taxon>Thermoproteota</taxon>
        <taxon>Thermoprotei</taxon>
        <taxon>Thermoproteales</taxon>
        <taxon>Thermoproteaceae</taxon>
        <taxon>Pyrobaculum</taxon>
    </lineage>
</organism>
<name>GSA_PYRIL</name>
<proteinExistence type="inferred from homology"/>
<keyword id="KW-0963">Cytoplasm</keyword>
<keyword id="KW-0413">Isomerase</keyword>
<keyword id="KW-0627">Porphyrin biosynthesis</keyword>
<keyword id="KW-0663">Pyridoxal phosphate</keyword>
<protein>
    <recommendedName>
        <fullName evidence="1">Glutamate-1-semialdehyde 2,1-aminomutase</fullName>
        <shortName evidence="1">GSA</shortName>
        <ecNumber evidence="1">5.4.3.8</ecNumber>
    </recommendedName>
    <alternativeName>
        <fullName evidence="1">Glutamate-1-semialdehyde aminotransferase</fullName>
        <shortName evidence="1">GSA-AT</shortName>
    </alternativeName>
</protein>
<comment type="catalytic activity">
    <reaction evidence="1">
        <text>(S)-4-amino-5-oxopentanoate = 5-aminolevulinate</text>
        <dbReference type="Rhea" id="RHEA:14265"/>
        <dbReference type="ChEBI" id="CHEBI:57501"/>
        <dbReference type="ChEBI" id="CHEBI:356416"/>
        <dbReference type="EC" id="5.4.3.8"/>
    </reaction>
</comment>
<comment type="cofactor">
    <cofactor evidence="1">
        <name>pyridoxal 5'-phosphate</name>
        <dbReference type="ChEBI" id="CHEBI:597326"/>
    </cofactor>
</comment>
<comment type="pathway">
    <text evidence="1">Porphyrin-containing compound metabolism; protoporphyrin-IX biosynthesis; 5-aminolevulinate from L-glutamyl-tRNA(Glu): step 2/2.</text>
</comment>
<comment type="subcellular location">
    <subcellularLocation>
        <location evidence="1">Cytoplasm</location>
    </subcellularLocation>
</comment>
<comment type="similarity">
    <text evidence="1">Belongs to the class-III pyridoxal-phosphate-dependent aminotransferase family. HemL subfamily.</text>
</comment>